<protein>
    <recommendedName>
        <fullName evidence="1">Peptidyl-tRNA hydrolase</fullName>
        <shortName evidence="1">Pth</shortName>
        <ecNumber evidence="1">3.1.1.29</ecNumber>
    </recommendedName>
</protein>
<sequence>MTAIKLIVGLGNPGAEYEQTRHNAGALFVERIAHAQGINLVADRKYFGLTGRFSHQGQDVRLLIPTTYMNRSGQAVAALAGFFRIKPEEILVAHDELDLPPGVAKLKLGGGHGGHNGLRDIIAQLGNQNNFYRLRLGIGHPGVASMVSNFVLGRAPRAEQEKLDASIDFVLGVLPDIFAGEWNRAMKNLHSQKA</sequence>
<feature type="chain" id="PRO_1000202594" description="Peptidyl-tRNA hydrolase">
    <location>
        <begin position="1"/>
        <end position="194"/>
    </location>
</feature>
<feature type="active site" description="Proton acceptor" evidence="1">
    <location>
        <position position="22"/>
    </location>
</feature>
<feature type="binding site" evidence="1">
    <location>
        <position position="17"/>
    </location>
    <ligand>
        <name>tRNA</name>
        <dbReference type="ChEBI" id="CHEBI:17843"/>
    </ligand>
</feature>
<feature type="binding site" evidence="1">
    <location>
        <position position="68"/>
    </location>
    <ligand>
        <name>tRNA</name>
        <dbReference type="ChEBI" id="CHEBI:17843"/>
    </ligand>
</feature>
<feature type="binding site" evidence="1">
    <location>
        <position position="70"/>
    </location>
    <ligand>
        <name>tRNA</name>
        <dbReference type="ChEBI" id="CHEBI:17843"/>
    </ligand>
</feature>
<feature type="binding site" evidence="1">
    <location>
        <position position="116"/>
    </location>
    <ligand>
        <name>tRNA</name>
        <dbReference type="ChEBI" id="CHEBI:17843"/>
    </ligand>
</feature>
<feature type="site" description="Discriminates between blocked and unblocked aminoacyl-tRNA" evidence="1">
    <location>
        <position position="12"/>
    </location>
</feature>
<feature type="site" description="Stabilizes the basic form of H active site to accept a proton" evidence="1">
    <location>
        <position position="95"/>
    </location>
</feature>
<reference key="1">
    <citation type="journal article" date="2009" name="Genome Biol.">
        <title>Genomic and genetic analyses of diversity and plant interactions of Pseudomonas fluorescens.</title>
        <authorList>
            <person name="Silby M.W."/>
            <person name="Cerdeno-Tarraga A.M."/>
            <person name="Vernikos G.S."/>
            <person name="Giddens S.R."/>
            <person name="Jackson R.W."/>
            <person name="Preston G.M."/>
            <person name="Zhang X.-X."/>
            <person name="Moon C.D."/>
            <person name="Gehrig S.M."/>
            <person name="Godfrey S.A.C."/>
            <person name="Knight C.G."/>
            <person name="Malone J.G."/>
            <person name="Robinson Z."/>
            <person name="Spiers A.J."/>
            <person name="Harris S."/>
            <person name="Challis G.L."/>
            <person name="Yaxley A.M."/>
            <person name="Harris D."/>
            <person name="Seeger K."/>
            <person name="Murphy L."/>
            <person name="Rutter S."/>
            <person name="Squares R."/>
            <person name="Quail M.A."/>
            <person name="Saunders E."/>
            <person name="Mavromatis K."/>
            <person name="Brettin T.S."/>
            <person name="Bentley S.D."/>
            <person name="Hothersall J."/>
            <person name="Stephens E."/>
            <person name="Thomas C.M."/>
            <person name="Parkhill J."/>
            <person name="Levy S.B."/>
            <person name="Rainey P.B."/>
            <person name="Thomson N.R."/>
        </authorList>
    </citation>
    <scope>NUCLEOTIDE SEQUENCE [LARGE SCALE GENOMIC DNA]</scope>
    <source>
        <strain>SBW25</strain>
    </source>
</reference>
<name>PTH_PSEFS</name>
<evidence type="ECO:0000255" key="1">
    <source>
        <dbReference type="HAMAP-Rule" id="MF_00083"/>
    </source>
</evidence>
<organism>
    <name type="scientific">Pseudomonas fluorescens (strain SBW25)</name>
    <dbReference type="NCBI Taxonomy" id="216595"/>
    <lineage>
        <taxon>Bacteria</taxon>
        <taxon>Pseudomonadati</taxon>
        <taxon>Pseudomonadota</taxon>
        <taxon>Gammaproteobacteria</taxon>
        <taxon>Pseudomonadales</taxon>
        <taxon>Pseudomonadaceae</taxon>
        <taxon>Pseudomonas</taxon>
    </lineage>
</organism>
<gene>
    <name evidence="1" type="primary">pth</name>
    <name type="ordered locus">PFLU_0730</name>
</gene>
<dbReference type="EC" id="3.1.1.29" evidence="1"/>
<dbReference type="EMBL" id="AM181176">
    <property type="protein sequence ID" value="CAY46999.1"/>
    <property type="molecule type" value="Genomic_DNA"/>
</dbReference>
<dbReference type="RefSeq" id="WP_012722104.1">
    <property type="nucleotide sequence ID" value="NC_012660.1"/>
</dbReference>
<dbReference type="SMR" id="C3KCR9"/>
<dbReference type="STRING" id="294.SRM1_04807"/>
<dbReference type="PATRIC" id="fig|216595.4.peg.965"/>
<dbReference type="eggNOG" id="COG0193">
    <property type="taxonomic scope" value="Bacteria"/>
</dbReference>
<dbReference type="HOGENOM" id="CLU_062456_3_1_6"/>
<dbReference type="OrthoDB" id="9800507at2"/>
<dbReference type="GO" id="GO:0005737">
    <property type="term" value="C:cytoplasm"/>
    <property type="evidence" value="ECO:0007669"/>
    <property type="project" value="UniProtKB-SubCell"/>
</dbReference>
<dbReference type="GO" id="GO:0004045">
    <property type="term" value="F:peptidyl-tRNA hydrolase activity"/>
    <property type="evidence" value="ECO:0007669"/>
    <property type="project" value="UniProtKB-UniRule"/>
</dbReference>
<dbReference type="GO" id="GO:0000049">
    <property type="term" value="F:tRNA binding"/>
    <property type="evidence" value="ECO:0007669"/>
    <property type="project" value="UniProtKB-UniRule"/>
</dbReference>
<dbReference type="GO" id="GO:0006515">
    <property type="term" value="P:protein quality control for misfolded or incompletely synthesized proteins"/>
    <property type="evidence" value="ECO:0007669"/>
    <property type="project" value="UniProtKB-UniRule"/>
</dbReference>
<dbReference type="GO" id="GO:0072344">
    <property type="term" value="P:rescue of stalled ribosome"/>
    <property type="evidence" value="ECO:0007669"/>
    <property type="project" value="UniProtKB-UniRule"/>
</dbReference>
<dbReference type="CDD" id="cd00462">
    <property type="entry name" value="PTH"/>
    <property type="match status" value="1"/>
</dbReference>
<dbReference type="FunFam" id="3.40.50.1470:FF:000001">
    <property type="entry name" value="Peptidyl-tRNA hydrolase"/>
    <property type="match status" value="1"/>
</dbReference>
<dbReference type="Gene3D" id="3.40.50.1470">
    <property type="entry name" value="Peptidyl-tRNA hydrolase"/>
    <property type="match status" value="1"/>
</dbReference>
<dbReference type="HAMAP" id="MF_00083">
    <property type="entry name" value="Pept_tRNA_hydro_bact"/>
    <property type="match status" value="1"/>
</dbReference>
<dbReference type="InterPro" id="IPR001328">
    <property type="entry name" value="Pept_tRNA_hydro"/>
</dbReference>
<dbReference type="InterPro" id="IPR018171">
    <property type="entry name" value="Pept_tRNA_hydro_CS"/>
</dbReference>
<dbReference type="InterPro" id="IPR036416">
    <property type="entry name" value="Pept_tRNA_hydro_sf"/>
</dbReference>
<dbReference type="NCBIfam" id="TIGR00447">
    <property type="entry name" value="pth"/>
    <property type="match status" value="1"/>
</dbReference>
<dbReference type="PANTHER" id="PTHR17224">
    <property type="entry name" value="PEPTIDYL-TRNA HYDROLASE"/>
    <property type="match status" value="1"/>
</dbReference>
<dbReference type="PANTHER" id="PTHR17224:SF1">
    <property type="entry name" value="PEPTIDYL-TRNA HYDROLASE"/>
    <property type="match status" value="1"/>
</dbReference>
<dbReference type="Pfam" id="PF01195">
    <property type="entry name" value="Pept_tRNA_hydro"/>
    <property type="match status" value="1"/>
</dbReference>
<dbReference type="SUPFAM" id="SSF53178">
    <property type="entry name" value="Peptidyl-tRNA hydrolase-like"/>
    <property type="match status" value="1"/>
</dbReference>
<dbReference type="PROSITE" id="PS01195">
    <property type="entry name" value="PEPT_TRNA_HYDROL_1"/>
    <property type="match status" value="1"/>
</dbReference>
<dbReference type="PROSITE" id="PS01196">
    <property type="entry name" value="PEPT_TRNA_HYDROL_2"/>
    <property type="match status" value="1"/>
</dbReference>
<proteinExistence type="inferred from homology"/>
<keyword id="KW-0963">Cytoplasm</keyword>
<keyword id="KW-0378">Hydrolase</keyword>
<keyword id="KW-0694">RNA-binding</keyword>
<keyword id="KW-0820">tRNA-binding</keyword>
<comment type="function">
    <text evidence="1">Hydrolyzes ribosome-free peptidyl-tRNAs (with 1 or more amino acids incorporated), which drop off the ribosome during protein synthesis, or as a result of ribosome stalling.</text>
</comment>
<comment type="function">
    <text evidence="1">Catalyzes the release of premature peptidyl moieties from peptidyl-tRNA molecules trapped in stalled 50S ribosomal subunits, and thus maintains levels of free tRNAs and 50S ribosomes.</text>
</comment>
<comment type="catalytic activity">
    <reaction evidence="1">
        <text>an N-acyl-L-alpha-aminoacyl-tRNA + H2O = an N-acyl-L-amino acid + a tRNA + H(+)</text>
        <dbReference type="Rhea" id="RHEA:54448"/>
        <dbReference type="Rhea" id="RHEA-COMP:10123"/>
        <dbReference type="Rhea" id="RHEA-COMP:13883"/>
        <dbReference type="ChEBI" id="CHEBI:15377"/>
        <dbReference type="ChEBI" id="CHEBI:15378"/>
        <dbReference type="ChEBI" id="CHEBI:59874"/>
        <dbReference type="ChEBI" id="CHEBI:78442"/>
        <dbReference type="ChEBI" id="CHEBI:138191"/>
        <dbReference type="EC" id="3.1.1.29"/>
    </reaction>
</comment>
<comment type="subunit">
    <text evidence="1">Monomer.</text>
</comment>
<comment type="subcellular location">
    <subcellularLocation>
        <location evidence="1">Cytoplasm</location>
    </subcellularLocation>
</comment>
<comment type="similarity">
    <text evidence="1">Belongs to the PTH family.</text>
</comment>
<accession>C3KCR9</accession>